<comment type="function">
    <text evidence="1">Together with its co-chaperonin GroES, plays an essential role in assisting protein folding. The GroEL-GroES system forms a nano-cage that allows encapsulation of the non-native substrate proteins and provides a physical environment optimized to promote and accelerate protein folding.</text>
</comment>
<comment type="catalytic activity">
    <reaction evidence="1">
        <text>ATP + H2O + a folded polypeptide = ADP + phosphate + an unfolded polypeptide.</text>
        <dbReference type="EC" id="5.6.1.7"/>
    </reaction>
</comment>
<comment type="subunit">
    <text evidence="1">Forms a cylinder of 14 subunits composed of two heptameric rings stacked back-to-back. Interacts with the co-chaperonin GroES.</text>
</comment>
<comment type="subcellular location">
    <subcellularLocation>
        <location evidence="1">Cytoplasm</location>
    </subcellularLocation>
</comment>
<comment type="similarity">
    <text evidence="1">Belongs to the chaperonin (HSP60) family.</text>
</comment>
<protein>
    <recommendedName>
        <fullName evidence="1">Chaperonin GroEL 1</fullName>
        <ecNumber evidence="1">5.6.1.7</ecNumber>
    </recommendedName>
    <alternativeName>
        <fullName evidence="1">60 kDa chaperonin 1</fullName>
    </alternativeName>
    <alternativeName>
        <fullName evidence="1">Chaperonin-60 1</fullName>
        <shortName evidence="1">Cpn60 1</shortName>
    </alternativeName>
    <alternativeName>
        <fullName>Heat shock protein 60 1</fullName>
    </alternativeName>
</protein>
<accession>P0CY97</accession>
<accession>Q9K2U4</accession>
<reference key="1">
    <citation type="journal article" date="2004" name="Science">
        <title>The complete genome sequence of Propionibacterium acnes, a commensal of human skin.</title>
        <authorList>
            <person name="Brueggemann H."/>
            <person name="Henne A."/>
            <person name="Hoster F."/>
            <person name="Liesegang H."/>
            <person name="Wiezer A."/>
            <person name="Strittmatter A."/>
            <person name="Hujer S."/>
            <person name="Duerre P."/>
            <person name="Gottschalk G."/>
        </authorList>
    </citation>
    <scope>NUCLEOTIDE SEQUENCE [LARGE SCALE GENOMIC DNA]</scope>
    <source>
        <strain>DSM 16379 / KPA171202</strain>
    </source>
</reference>
<keyword id="KW-0067">ATP-binding</keyword>
<keyword id="KW-0143">Chaperone</keyword>
<keyword id="KW-0963">Cytoplasm</keyword>
<keyword id="KW-0413">Isomerase</keyword>
<keyword id="KW-0547">Nucleotide-binding</keyword>
<name>CH601_CUTAK</name>
<feature type="chain" id="PRO_0000063478" description="Chaperonin GroEL 1">
    <location>
        <begin position="1"/>
        <end position="544"/>
    </location>
</feature>
<feature type="region of interest" description="Disordered" evidence="2">
    <location>
        <begin position="523"/>
        <end position="544"/>
    </location>
</feature>
<feature type="compositionally biased region" description="Gly residues" evidence="2">
    <location>
        <begin position="529"/>
        <end position="544"/>
    </location>
</feature>
<feature type="binding site" evidence="1">
    <location>
        <begin position="29"/>
        <end position="32"/>
    </location>
    <ligand>
        <name>ATP</name>
        <dbReference type="ChEBI" id="CHEBI:30616"/>
    </ligand>
</feature>
<feature type="binding site" evidence="1">
    <location>
        <begin position="86"/>
        <end position="90"/>
    </location>
    <ligand>
        <name>ATP</name>
        <dbReference type="ChEBI" id="CHEBI:30616"/>
    </ligand>
</feature>
<feature type="binding site" evidence="1">
    <location>
        <position position="413"/>
    </location>
    <ligand>
        <name>ATP</name>
        <dbReference type="ChEBI" id="CHEBI:30616"/>
    </ligand>
</feature>
<feature type="binding site" evidence="1">
    <location>
        <begin position="476"/>
        <end position="478"/>
    </location>
    <ligand>
        <name>ATP</name>
        <dbReference type="ChEBI" id="CHEBI:30616"/>
    </ligand>
</feature>
<feature type="binding site" evidence="1">
    <location>
        <position position="492"/>
    </location>
    <ligand>
        <name>ATP</name>
        <dbReference type="ChEBI" id="CHEBI:30616"/>
    </ligand>
</feature>
<dbReference type="EC" id="5.6.1.7" evidence="1"/>
<dbReference type="EMBL" id="AE017283">
    <property type="protein sequence ID" value="AAT82205.1"/>
    <property type="molecule type" value="Genomic_DNA"/>
</dbReference>
<dbReference type="SMR" id="P0CY97"/>
<dbReference type="EnsemblBacteria" id="AAT82205">
    <property type="protein sequence ID" value="AAT82205"/>
    <property type="gene ID" value="PPA0453"/>
</dbReference>
<dbReference type="KEGG" id="pac:PPA0453"/>
<dbReference type="eggNOG" id="COG0459">
    <property type="taxonomic scope" value="Bacteria"/>
</dbReference>
<dbReference type="HOGENOM" id="CLU_016503_3_0_11"/>
<dbReference type="Proteomes" id="UP000000603">
    <property type="component" value="Chromosome"/>
</dbReference>
<dbReference type="GO" id="GO:0005737">
    <property type="term" value="C:cytoplasm"/>
    <property type="evidence" value="ECO:0007669"/>
    <property type="project" value="UniProtKB-SubCell"/>
</dbReference>
<dbReference type="GO" id="GO:0005524">
    <property type="term" value="F:ATP binding"/>
    <property type="evidence" value="ECO:0007669"/>
    <property type="project" value="UniProtKB-UniRule"/>
</dbReference>
<dbReference type="GO" id="GO:0140662">
    <property type="term" value="F:ATP-dependent protein folding chaperone"/>
    <property type="evidence" value="ECO:0007669"/>
    <property type="project" value="InterPro"/>
</dbReference>
<dbReference type="GO" id="GO:0016853">
    <property type="term" value="F:isomerase activity"/>
    <property type="evidence" value="ECO:0007669"/>
    <property type="project" value="UniProtKB-KW"/>
</dbReference>
<dbReference type="GO" id="GO:0051082">
    <property type="term" value="F:unfolded protein binding"/>
    <property type="evidence" value="ECO:0007669"/>
    <property type="project" value="UniProtKB-UniRule"/>
</dbReference>
<dbReference type="GO" id="GO:0042026">
    <property type="term" value="P:protein refolding"/>
    <property type="evidence" value="ECO:0007669"/>
    <property type="project" value="UniProtKB-UniRule"/>
</dbReference>
<dbReference type="CDD" id="cd03344">
    <property type="entry name" value="GroEL"/>
    <property type="match status" value="1"/>
</dbReference>
<dbReference type="FunFam" id="3.50.7.10:FF:000001">
    <property type="entry name" value="60 kDa chaperonin"/>
    <property type="match status" value="1"/>
</dbReference>
<dbReference type="Gene3D" id="3.50.7.10">
    <property type="entry name" value="GroEL"/>
    <property type="match status" value="1"/>
</dbReference>
<dbReference type="Gene3D" id="1.10.560.10">
    <property type="entry name" value="GroEL-like equatorial domain"/>
    <property type="match status" value="1"/>
</dbReference>
<dbReference type="Gene3D" id="3.30.260.10">
    <property type="entry name" value="TCP-1-like chaperonin intermediate domain"/>
    <property type="match status" value="1"/>
</dbReference>
<dbReference type="HAMAP" id="MF_00600">
    <property type="entry name" value="CH60"/>
    <property type="match status" value="1"/>
</dbReference>
<dbReference type="InterPro" id="IPR018370">
    <property type="entry name" value="Chaperonin_Cpn60_CS"/>
</dbReference>
<dbReference type="InterPro" id="IPR001844">
    <property type="entry name" value="Cpn60/GroEL"/>
</dbReference>
<dbReference type="InterPro" id="IPR002423">
    <property type="entry name" value="Cpn60/GroEL/TCP-1"/>
</dbReference>
<dbReference type="InterPro" id="IPR027409">
    <property type="entry name" value="GroEL-like_apical_dom_sf"/>
</dbReference>
<dbReference type="InterPro" id="IPR027413">
    <property type="entry name" value="GROEL-like_equatorial_sf"/>
</dbReference>
<dbReference type="InterPro" id="IPR027410">
    <property type="entry name" value="TCP-1-like_intermed_sf"/>
</dbReference>
<dbReference type="NCBIfam" id="TIGR02348">
    <property type="entry name" value="GroEL"/>
    <property type="match status" value="1"/>
</dbReference>
<dbReference type="NCBIfam" id="NF000592">
    <property type="entry name" value="PRK00013.1"/>
    <property type="match status" value="1"/>
</dbReference>
<dbReference type="NCBIfam" id="NF009487">
    <property type="entry name" value="PRK12849.1"/>
    <property type="match status" value="1"/>
</dbReference>
<dbReference type="NCBIfam" id="NF009488">
    <property type="entry name" value="PRK12850.1"/>
    <property type="match status" value="1"/>
</dbReference>
<dbReference type="NCBIfam" id="NF009489">
    <property type="entry name" value="PRK12851.1"/>
    <property type="match status" value="1"/>
</dbReference>
<dbReference type="PANTHER" id="PTHR45633">
    <property type="entry name" value="60 KDA HEAT SHOCK PROTEIN, MITOCHONDRIAL"/>
    <property type="match status" value="1"/>
</dbReference>
<dbReference type="Pfam" id="PF00118">
    <property type="entry name" value="Cpn60_TCP1"/>
    <property type="match status" value="1"/>
</dbReference>
<dbReference type="PRINTS" id="PR00298">
    <property type="entry name" value="CHAPERONIN60"/>
</dbReference>
<dbReference type="SUPFAM" id="SSF52029">
    <property type="entry name" value="GroEL apical domain-like"/>
    <property type="match status" value="1"/>
</dbReference>
<dbReference type="SUPFAM" id="SSF48592">
    <property type="entry name" value="GroEL equatorial domain-like"/>
    <property type="match status" value="1"/>
</dbReference>
<dbReference type="SUPFAM" id="SSF54849">
    <property type="entry name" value="GroEL-intermediate domain like"/>
    <property type="match status" value="1"/>
</dbReference>
<dbReference type="PROSITE" id="PS00296">
    <property type="entry name" value="CHAPERONINS_CPN60"/>
    <property type="match status" value="1"/>
</dbReference>
<organism>
    <name type="scientific">Cutibacterium acnes (strain DSM 16379 / KPA171202)</name>
    <name type="common">Propionibacterium acnes</name>
    <dbReference type="NCBI Taxonomy" id="267747"/>
    <lineage>
        <taxon>Bacteria</taxon>
        <taxon>Bacillati</taxon>
        <taxon>Actinomycetota</taxon>
        <taxon>Actinomycetes</taxon>
        <taxon>Propionibacteriales</taxon>
        <taxon>Propionibacteriaceae</taxon>
        <taxon>Cutibacterium</taxon>
    </lineage>
</organism>
<evidence type="ECO:0000255" key="1">
    <source>
        <dbReference type="HAMAP-Rule" id="MF_00600"/>
    </source>
</evidence>
<evidence type="ECO:0000256" key="2">
    <source>
        <dbReference type="SAM" id="MobiDB-lite"/>
    </source>
</evidence>
<sequence length="544" mass="56840">MAKLIEFNIEARRGLEAGMNTLADAVKVTLGPKGRNVVLEKSWGAPTITNDGVSIAKEIELDDPYEKIGAELVKEVAKKTDDVAGDGTTTATVLAQAMVREGLRNVTAGANPMGLKKGIEAAVQAVSARLSDMAIDIETKDQIASTASISAADPTVGEIIAEAMDKVGKEGVITVEESNTFGLELELTEGMRFDKGYISPYFVTDTERMEAVLEDPYILIVNSKISSLKDLLPVLEKVMQSGKPLFVIAEDVEGEALAGLIVNKIRGTFKSVAVKAPGFGDRRKAMLNDIAILTGGQVISEEVGLSLDAVTLDLLGRARQVVVTKDEATIVDGAGDSEQIAGRVSQIRKEIENSDSDYDREKLQERLAKLAGGVAVIKVGAATEVELKERKHRIEDAVRNAKAAVEEGIIPGGGVALLQASKAAEIEGLEGDELTGAQIVLAACTAPLKQIAINAGLEGGVVAEKVAGLPAGQGLNAANDEYVDMVEAGIIDPAKVTRSALQNAASIAALFLTTEAVIADKPEPVKAPAGGGDMDGMGGMGGMM</sequence>
<gene>
    <name evidence="1" type="primary">groEL1</name>
    <name evidence="1" type="synonym">groL1</name>
    <name type="synonym">hsp60</name>
    <name type="ordered locus">PPA0453</name>
</gene>
<proteinExistence type="inferred from homology"/>